<reference key="1">
    <citation type="journal article" date="1995" name="J. Neurosci. Res.">
        <title>Zebrafish neurons express two L1-related molecules during early axonogenesis.</title>
        <authorList>
            <person name="Tongiorgi E."/>
            <person name="Bernhardt R.R."/>
            <person name="Schachner M."/>
        </authorList>
    </citation>
    <scope>NUCLEOTIDE SEQUENCE [MRNA]</scope>
    <scope>TISSUE SPECIFICITY</scope>
    <scope>DEVELOPMENTAL STAGE</scope>
    <source>
        <tissue>Embryo</tissue>
    </source>
</reference>
<organism>
    <name type="scientific">Danio rerio</name>
    <name type="common">Zebrafish</name>
    <name type="synonym">Brachydanio rerio</name>
    <dbReference type="NCBI Taxonomy" id="7955"/>
    <lineage>
        <taxon>Eukaryota</taxon>
        <taxon>Metazoa</taxon>
        <taxon>Chordata</taxon>
        <taxon>Craniata</taxon>
        <taxon>Vertebrata</taxon>
        <taxon>Euteleostomi</taxon>
        <taxon>Actinopterygii</taxon>
        <taxon>Neopterygii</taxon>
        <taxon>Teleostei</taxon>
        <taxon>Ostariophysi</taxon>
        <taxon>Cypriniformes</taxon>
        <taxon>Danionidae</taxon>
        <taxon>Danioninae</taxon>
        <taxon>Danio</taxon>
    </lineage>
</organism>
<keyword id="KW-0130">Cell adhesion</keyword>
<keyword id="KW-1003">Cell membrane</keyword>
<keyword id="KW-0966">Cell projection</keyword>
<keyword id="KW-0217">Developmental protein</keyword>
<keyword id="KW-0221">Differentiation</keyword>
<keyword id="KW-1015">Disulfide bond</keyword>
<keyword id="KW-0325">Glycoprotein</keyword>
<keyword id="KW-0393">Immunoglobulin domain</keyword>
<keyword id="KW-0472">Membrane</keyword>
<keyword id="KW-0524">Neurogenesis</keyword>
<keyword id="KW-1185">Reference proteome</keyword>
<keyword id="KW-0677">Repeat</keyword>
<keyword id="KW-0812">Transmembrane</keyword>
<keyword id="KW-1133">Transmembrane helix</keyword>
<accession>Q90478</accession>
<protein>
    <recommendedName>
        <fullName>Neural cell adhesion molecule L1.1</fullName>
        <shortName>N-CAM-L1.1</shortName>
        <shortName>NCAM-L1.1</shortName>
    </recommendedName>
</protein>
<sequence length="1197" mass="132861">EFRQRDPSPSFRWVKDGKQFGEVLSESGTLTPHPTMDLHFYQGTYRCYAANELGTAVSNLVHLTTEPVPSLAKVKKQKRRAYEVGESAVLRCNPPKSSVTPKIHWMDMQFHHIPLNERVTISRDGNLYFANLIANDSRDDYTCNAHYINASIILPKEPMSIYVTPSNSVVKNRRAKLHHPAGARSSYLVLRGQTLTLQCIPEGLPTPEVHWDRIDSALSPNRTKKLYNNRWLQIDNVLESDDGEYVCTARNSENSVKHHYTVTVEAAPYWTRSPEEHLYAPGETVRLDCKADGIPAPNITWSINGVPVSGTDVDPRRRVSSGKLILSNVEFSDTAVYQCEAVNKHGSILINTHVHVVELPAQILTPDERLYQATAGQTVMLDCRTFGSPLPKIHWEILDSIPALSNAKISQTTNGSLKISNVSEEDSNRYTCSVSETNKSISADVEVLNRTKIVGPPQNLHVIRGSDAILHCKYTVDHNLKSPTVQWNKDGHKITASTSNDKYHEIEGSLKVLDVQMEDMGIYSCEVSTTLDSDTASGYITVQDKPDPPQSLKLSEKMERSVTISWMPSVENNSPVTEYVIEMNEGETPDEGQWQKYRSVSQDIDSWRSICSYSKYHFQIRAVNSIGTSAPTESSLSYSTPAAKPDTNPENVMTLSTDPKSMIISWQEMDRRQFNGPGFQYKVFWRRAADSGAHWTESSVSNPPLMVNNTGTFVSFEIKVQAVNDLGAAPEPLTVIGYSGEDFPLEAPSALSVTELQKTSVMVRWSPVRPESVRGHLLGYKIYLRMKGSQWETPGRAVSSSGNPTVIEVPADAAEKIVSDLQFYSDYTLTITAFNSKGEGPHSEESFSTPEGAPGPVLFLPFDSPSESEITLRWEAPHKPNGEIRGYLLQYQEVVIGSESPQHVESIDLPAVTEFTLKNLNPESRYTFHLSARNDAGDGAPAIQSGATLLDGEPPSVINMTAGETSVNLSWVPGDRHRNLGFSFRYLKKIEGAEWEESEKINSTQAFYQLQGLDSGVIYHLQVLSGNTSYDWDFKTIYSPEWHKSPRNFATEGWFIGLISALVLLLLVLLLLCYIKKSKGGKYSVKDKEEGQGDAANQKLKDDAFGEYRSLESDMEKCSISQPSGCESKRSSNDSLADYGDSVDIQFNEDGSFIGQYSGRRDPRGHDSSGAVSPVNPNMPPPSHSFPTSVTGILGPN</sequence>
<dbReference type="EMBL" id="X89204">
    <property type="protein sequence ID" value="CAA61490.1"/>
    <property type="molecule type" value="mRNA"/>
</dbReference>
<dbReference type="PIR" id="T30581">
    <property type="entry name" value="T30581"/>
</dbReference>
<dbReference type="SMR" id="Q90478"/>
<dbReference type="FunCoup" id="Q90478">
    <property type="interactions" value="187"/>
</dbReference>
<dbReference type="STRING" id="7955.ENSDARP00000121175"/>
<dbReference type="GlyCosmos" id="Q90478">
    <property type="glycosylation" value="13 sites, No reported glycans"/>
</dbReference>
<dbReference type="PaxDb" id="7955-ENSDARP00000121175"/>
<dbReference type="AGR" id="ZFIN:ZDB-GENE-980526-512"/>
<dbReference type="ZFIN" id="ZDB-GENE-980526-512">
    <property type="gene designation" value="l1camb"/>
</dbReference>
<dbReference type="eggNOG" id="KOG3513">
    <property type="taxonomic scope" value="Eukaryota"/>
</dbReference>
<dbReference type="InParanoid" id="Q90478"/>
<dbReference type="PhylomeDB" id="Q90478"/>
<dbReference type="Proteomes" id="UP000000437">
    <property type="component" value="Unplaced"/>
</dbReference>
<dbReference type="GO" id="GO:0030424">
    <property type="term" value="C:axon"/>
    <property type="evidence" value="ECO:0000318"/>
    <property type="project" value="GO_Central"/>
</dbReference>
<dbReference type="GO" id="GO:0044295">
    <property type="term" value="C:axonal growth cone"/>
    <property type="evidence" value="ECO:0000250"/>
    <property type="project" value="UniProtKB"/>
</dbReference>
<dbReference type="GO" id="GO:0005886">
    <property type="term" value="C:plasma membrane"/>
    <property type="evidence" value="ECO:0000318"/>
    <property type="project" value="GO_Central"/>
</dbReference>
<dbReference type="GO" id="GO:0098632">
    <property type="term" value="F:cell-cell adhesion mediator activity"/>
    <property type="evidence" value="ECO:0000318"/>
    <property type="project" value="GO_Central"/>
</dbReference>
<dbReference type="GO" id="GO:0007411">
    <property type="term" value="P:axon guidance"/>
    <property type="evidence" value="ECO:0000318"/>
    <property type="project" value="GO_Central"/>
</dbReference>
<dbReference type="GO" id="GO:0031103">
    <property type="term" value="P:axon regeneration"/>
    <property type="evidence" value="ECO:0000315"/>
    <property type="project" value="ZFIN"/>
</dbReference>
<dbReference type="GO" id="GO:0060536">
    <property type="term" value="P:cartilage morphogenesis"/>
    <property type="evidence" value="ECO:0000316"/>
    <property type="project" value="CACAO"/>
</dbReference>
<dbReference type="GO" id="GO:0098609">
    <property type="term" value="P:cell-cell adhesion"/>
    <property type="evidence" value="ECO:0000318"/>
    <property type="project" value="GO_Central"/>
</dbReference>
<dbReference type="GO" id="GO:0007399">
    <property type="term" value="P:nervous system development"/>
    <property type="evidence" value="ECO:0000315"/>
    <property type="project" value="ZFIN"/>
</dbReference>
<dbReference type="GO" id="GO:0045773">
    <property type="term" value="P:positive regulation of axon extension"/>
    <property type="evidence" value="ECO:0000250"/>
    <property type="project" value="UniProtKB"/>
</dbReference>
<dbReference type="GO" id="GO:0010628">
    <property type="term" value="P:positive regulation of gene expression"/>
    <property type="evidence" value="ECO:0000315"/>
    <property type="project" value="CACAO"/>
</dbReference>
<dbReference type="CDD" id="cd00063">
    <property type="entry name" value="FN3"/>
    <property type="match status" value="5"/>
</dbReference>
<dbReference type="CDD" id="cd05876">
    <property type="entry name" value="Ig3_L1-CAM"/>
    <property type="match status" value="1"/>
</dbReference>
<dbReference type="FunFam" id="2.60.40.10:FF:002563">
    <property type="entry name" value="Neural cell adhesion molecule L1"/>
    <property type="match status" value="1"/>
</dbReference>
<dbReference type="FunFam" id="2.60.40.10:FF:002813">
    <property type="entry name" value="Neural cell adhesion molecule L1"/>
    <property type="match status" value="1"/>
</dbReference>
<dbReference type="FunFam" id="2.60.40.10:FF:000057">
    <property type="entry name" value="neural cell adhesion molecule L1"/>
    <property type="match status" value="1"/>
</dbReference>
<dbReference type="FunFam" id="2.60.40.10:FF:000367">
    <property type="entry name" value="Neural cell adhesion molecule L1-like protein"/>
    <property type="match status" value="1"/>
</dbReference>
<dbReference type="FunFam" id="2.60.40.10:FF:002946">
    <property type="entry name" value="Neuron-glia cell adhesion molecule (Ng-CAM)"/>
    <property type="match status" value="1"/>
</dbReference>
<dbReference type="FunFam" id="2.60.40.10:FF:000005">
    <property type="entry name" value="Neuronal cell adhesion molecule"/>
    <property type="match status" value="1"/>
</dbReference>
<dbReference type="FunFam" id="2.60.40.10:FF:000078">
    <property type="entry name" value="Neuronal cell adhesion molecule"/>
    <property type="match status" value="1"/>
</dbReference>
<dbReference type="FunFam" id="2.60.40.10:FF:000347">
    <property type="entry name" value="Neuronal cell adhesion molecule"/>
    <property type="match status" value="1"/>
</dbReference>
<dbReference type="Gene3D" id="2.60.40.10">
    <property type="entry name" value="Immunoglobulins"/>
    <property type="match status" value="11"/>
</dbReference>
<dbReference type="InterPro" id="IPR003961">
    <property type="entry name" value="FN3_dom"/>
</dbReference>
<dbReference type="InterPro" id="IPR036116">
    <property type="entry name" value="FN3_sf"/>
</dbReference>
<dbReference type="InterPro" id="IPR007110">
    <property type="entry name" value="Ig-like_dom"/>
</dbReference>
<dbReference type="InterPro" id="IPR036179">
    <property type="entry name" value="Ig-like_dom_sf"/>
</dbReference>
<dbReference type="InterPro" id="IPR013783">
    <property type="entry name" value="Ig-like_fold"/>
</dbReference>
<dbReference type="InterPro" id="IPR013098">
    <property type="entry name" value="Ig_I-set"/>
</dbReference>
<dbReference type="InterPro" id="IPR003599">
    <property type="entry name" value="Ig_sub"/>
</dbReference>
<dbReference type="InterPro" id="IPR003598">
    <property type="entry name" value="Ig_sub2"/>
</dbReference>
<dbReference type="InterPro" id="IPR026966">
    <property type="entry name" value="Neurofascin/L1/NrCAM_C"/>
</dbReference>
<dbReference type="PANTHER" id="PTHR44170:SF36">
    <property type="entry name" value="L1 CELL ADHESION MOLECULE"/>
    <property type="match status" value="1"/>
</dbReference>
<dbReference type="PANTHER" id="PTHR44170">
    <property type="entry name" value="PROTEIN SIDEKICK"/>
    <property type="match status" value="1"/>
</dbReference>
<dbReference type="Pfam" id="PF13882">
    <property type="entry name" value="Bravo_FIGEY"/>
    <property type="match status" value="1"/>
</dbReference>
<dbReference type="Pfam" id="PF00041">
    <property type="entry name" value="fn3"/>
    <property type="match status" value="3"/>
</dbReference>
<dbReference type="Pfam" id="PF07679">
    <property type="entry name" value="I-set"/>
    <property type="match status" value="2"/>
</dbReference>
<dbReference type="Pfam" id="PF13927">
    <property type="entry name" value="Ig_3"/>
    <property type="match status" value="2"/>
</dbReference>
<dbReference type="PRINTS" id="PR00014">
    <property type="entry name" value="FNTYPEIII"/>
</dbReference>
<dbReference type="SMART" id="SM00060">
    <property type="entry name" value="FN3"/>
    <property type="match status" value="5"/>
</dbReference>
<dbReference type="SMART" id="SM00409">
    <property type="entry name" value="IG"/>
    <property type="match status" value="5"/>
</dbReference>
<dbReference type="SMART" id="SM00408">
    <property type="entry name" value="IGc2"/>
    <property type="match status" value="4"/>
</dbReference>
<dbReference type="SUPFAM" id="SSF49265">
    <property type="entry name" value="Fibronectin type III"/>
    <property type="match status" value="3"/>
</dbReference>
<dbReference type="SUPFAM" id="SSF48726">
    <property type="entry name" value="Immunoglobulin"/>
    <property type="match status" value="6"/>
</dbReference>
<dbReference type="PROSITE" id="PS50853">
    <property type="entry name" value="FN3"/>
    <property type="match status" value="5"/>
</dbReference>
<dbReference type="PROSITE" id="PS50835">
    <property type="entry name" value="IG_LIKE"/>
    <property type="match status" value="6"/>
</dbReference>
<feature type="chain" id="PRO_0000072705" description="Neural cell adhesion molecule L1.1">
    <location>
        <begin position="1" status="less than"/>
        <end position="1197"/>
    </location>
</feature>
<feature type="topological domain" description="Extracellular" evidence="3">
    <location>
        <begin position="1" status="less than"/>
        <end position="1054"/>
    </location>
</feature>
<feature type="transmembrane region" description="Helical" evidence="3">
    <location>
        <begin position="1055"/>
        <end position="1075"/>
    </location>
</feature>
<feature type="topological domain" description="Cytoplasmic" evidence="3">
    <location>
        <begin position="1076"/>
        <end position="1197"/>
    </location>
</feature>
<feature type="domain" description="Ig-like C2-type 1">
    <location>
        <begin position="1" status="less than"/>
        <end position="58"/>
    </location>
</feature>
<feature type="domain" description="Ig-like C2-type 2">
    <location>
        <begin position="69"/>
        <end position="160"/>
    </location>
</feature>
<feature type="domain" description="Ig-like C2-type 3">
    <location>
        <begin position="165"/>
        <end position="263"/>
    </location>
</feature>
<feature type="domain" description="Ig-like C2-type 4">
    <location>
        <begin position="268"/>
        <end position="355"/>
    </location>
</feature>
<feature type="domain" description="Ig-like C2-type 5">
    <location>
        <begin position="360"/>
        <end position="442"/>
    </location>
</feature>
<feature type="domain" description="Ig-like C2-type 6">
    <location>
        <begin position="451"/>
        <end position="541"/>
    </location>
</feature>
<feature type="domain" description="Fibronectin type-III 1" evidence="5">
    <location>
        <begin position="548"/>
        <end position="643"/>
    </location>
</feature>
<feature type="domain" description="Fibronectin type-III 2" evidence="5">
    <location>
        <begin position="645"/>
        <end position="742"/>
    </location>
</feature>
<feature type="domain" description="Fibronectin type-III 3" evidence="5">
    <location>
        <begin position="747"/>
        <end position="852"/>
    </location>
</feature>
<feature type="domain" description="Fibronectin type-III 4" evidence="5">
    <location>
        <begin position="853"/>
        <end position="952"/>
    </location>
</feature>
<feature type="domain" description="Fibronectin type-III 5" evidence="5">
    <location>
        <begin position="953"/>
        <end position="1048"/>
    </location>
</feature>
<feature type="region of interest" description="Disordered" evidence="6">
    <location>
        <begin position="630"/>
        <end position="655"/>
    </location>
</feature>
<feature type="region of interest" description="Disordered" evidence="6">
    <location>
        <begin position="1115"/>
        <end position="1135"/>
    </location>
</feature>
<feature type="region of interest" description="Disordered" evidence="6">
    <location>
        <begin position="1154"/>
        <end position="1197"/>
    </location>
</feature>
<feature type="compositionally biased region" description="Polar residues" evidence="6">
    <location>
        <begin position="630"/>
        <end position="640"/>
    </location>
</feature>
<feature type="glycosylation site" description="N-linked (GlcNAc...) asparagine" evidence="3">
    <location>
        <position position="135"/>
    </location>
</feature>
<feature type="glycosylation site" description="N-linked (GlcNAc...) asparagine" evidence="3">
    <location>
        <position position="149"/>
    </location>
</feature>
<feature type="glycosylation site" description="N-linked (GlcNAc...) asparagine" evidence="3">
    <location>
        <position position="221"/>
    </location>
</feature>
<feature type="glycosylation site" description="N-linked (GlcNAc...) asparagine" evidence="3">
    <location>
        <position position="298"/>
    </location>
</feature>
<feature type="glycosylation site" description="N-linked (GlcNAc...) asparagine" evidence="3">
    <location>
        <position position="414"/>
    </location>
</feature>
<feature type="glycosylation site" description="N-linked (GlcNAc...) asparagine" evidence="3">
    <location>
        <position position="421"/>
    </location>
</feature>
<feature type="glycosylation site" description="N-linked (GlcNAc...) asparagine" evidence="3">
    <location>
        <position position="438"/>
    </location>
</feature>
<feature type="glycosylation site" description="N-linked (GlcNAc...) asparagine" evidence="3">
    <location>
        <position position="449"/>
    </location>
</feature>
<feature type="glycosylation site" description="N-linked (GlcNAc...) asparagine" evidence="3">
    <location>
        <position position="708"/>
    </location>
</feature>
<feature type="glycosylation site" description="N-linked (GlcNAc...) asparagine" evidence="3">
    <location>
        <position position="959"/>
    </location>
</feature>
<feature type="glycosylation site" description="N-linked (GlcNAc...) asparagine" evidence="3">
    <location>
        <position position="968"/>
    </location>
</feature>
<feature type="glycosylation site" description="N-linked (GlcNAc...) asparagine" evidence="3">
    <location>
        <position position="1002"/>
    </location>
</feature>
<feature type="glycosylation site" description="N-linked (GlcNAc...) asparagine" evidence="3">
    <location>
        <position position="1027"/>
    </location>
</feature>
<feature type="disulfide bond" evidence="4">
    <location>
        <begin position="92"/>
        <end position="143"/>
    </location>
</feature>
<feature type="disulfide bond" evidence="4">
    <location>
        <begin position="199"/>
        <end position="247"/>
    </location>
</feature>
<feature type="disulfide bond" evidence="4">
    <location>
        <begin position="289"/>
        <end position="339"/>
    </location>
</feature>
<feature type="disulfide bond" evidence="4">
    <location>
        <begin position="383"/>
        <end position="432"/>
    </location>
</feature>
<feature type="disulfide bond" evidence="4">
    <location>
        <begin position="472"/>
        <end position="525"/>
    </location>
</feature>
<feature type="non-terminal residue">
    <location>
        <position position="1"/>
    </location>
</feature>
<name>L1CA1_DANRE</name>
<proteinExistence type="evidence at transcript level"/>
<comment type="function">
    <text evidence="1">Cell adhesion molecule with an important role in the development of the nervous system. Involved in neuron-neuron adhesion, neurite fasciculation, outgrowth of neurites, etc. Binds to axonin on neurons (By similarity).</text>
</comment>
<comment type="subcellular location">
    <subcellularLocation>
        <location>Cell membrane</location>
        <topology>Single-pass type I membrane protein</topology>
    </subcellularLocation>
    <subcellularLocation>
        <location evidence="2">Cell projection</location>
        <location evidence="2">Growth cone</location>
    </subcellularLocation>
</comment>
<comment type="tissue specificity">
    <text evidence="7">Expressed in postmitotic neurons in 16-36 hours embryos, including those in the brain, cranial ganglia and otic and olfactory placodes, and in all classes of spinal neurons.</text>
</comment>
<comment type="developmental stage">
    <text evidence="7">Onset of expression correlates with the initiation of axonogenesis in 16-36 hours embryos.</text>
</comment>
<comment type="similarity">
    <text evidence="8">Belongs to the immunoglobulin superfamily. L1/neurofascin/NgCAM family.</text>
</comment>
<evidence type="ECO:0000250" key="1"/>
<evidence type="ECO:0000250" key="2">
    <source>
        <dbReference type="UniProtKB" id="Q05695"/>
    </source>
</evidence>
<evidence type="ECO:0000255" key="3"/>
<evidence type="ECO:0000255" key="4">
    <source>
        <dbReference type="PROSITE-ProRule" id="PRU00114"/>
    </source>
</evidence>
<evidence type="ECO:0000255" key="5">
    <source>
        <dbReference type="PROSITE-ProRule" id="PRU00316"/>
    </source>
</evidence>
<evidence type="ECO:0000256" key="6">
    <source>
        <dbReference type="SAM" id="MobiDB-lite"/>
    </source>
</evidence>
<evidence type="ECO:0000269" key="7">
    <source>
    </source>
</evidence>
<evidence type="ECO:0000305" key="8"/>
<gene>
    <name type="primary">nadl1.1</name>
</gene>